<evidence type="ECO:0000250" key="1"/>
<evidence type="ECO:0000250" key="2">
    <source>
        <dbReference type="UniProtKB" id="P00157"/>
    </source>
</evidence>
<evidence type="ECO:0000255" key="3">
    <source>
        <dbReference type="PROSITE-ProRule" id="PRU00967"/>
    </source>
</evidence>
<evidence type="ECO:0000255" key="4">
    <source>
        <dbReference type="PROSITE-ProRule" id="PRU00968"/>
    </source>
</evidence>
<reference key="1">
    <citation type="journal article" date="1998" name="Mol. Biol. Evol.">
        <title>Body size effects and rates of cytochrome-b evolution in tube-nosed seabirds.</title>
        <authorList>
            <person name="Nunn G.B."/>
            <person name="Stanley S.E."/>
        </authorList>
    </citation>
    <scope>NUCLEOTIDE SEQUENCE [GENOMIC DNA]</scope>
    <source>
        <strain>Isolate NGPC-1</strain>
    </source>
</reference>
<protein>
    <recommendedName>
        <fullName>Cytochrome b</fullName>
    </recommendedName>
    <alternativeName>
        <fullName>Complex III subunit 3</fullName>
    </alternativeName>
    <alternativeName>
        <fullName>Complex III subunit III</fullName>
    </alternativeName>
    <alternativeName>
        <fullName>Cytochrome b-c1 complex subunit 3</fullName>
    </alternativeName>
    <alternativeName>
        <fullName>Ubiquinol-cytochrome-c reductase complex cytochrome b subunit</fullName>
    </alternativeName>
</protein>
<keyword id="KW-0249">Electron transport</keyword>
<keyword id="KW-0349">Heme</keyword>
<keyword id="KW-0408">Iron</keyword>
<keyword id="KW-0472">Membrane</keyword>
<keyword id="KW-0479">Metal-binding</keyword>
<keyword id="KW-0496">Mitochondrion</keyword>
<keyword id="KW-0999">Mitochondrion inner membrane</keyword>
<keyword id="KW-0679">Respiratory chain</keyword>
<keyword id="KW-0812">Transmembrane</keyword>
<keyword id="KW-1133">Transmembrane helix</keyword>
<keyword id="KW-0813">Transport</keyword>
<keyword id="KW-0830">Ubiquinone</keyword>
<feature type="chain" id="PRO_0000061144" description="Cytochrome b">
    <location>
        <begin position="1"/>
        <end position="380"/>
    </location>
</feature>
<feature type="transmembrane region" description="Helical" evidence="2">
    <location>
        <begin position="34"/>
        <end position="54"/>
    </location>
</feature>
<feature type="transmembrane region" description="Helical" evidence="2">
    <location>
        <begin position="78"/>
        <end position="99"/>
    </location>
</feature>
<feature type="transmembrane region" description="Helical" evidence="2">
    <location>
        <begin position="114"/>
        <end position="134"/>
    </location>
</feature>
<feature type="transmembrane region" description="Helical" evidence="2">
    <location>
        <begin position="179"/>
        <end position="199"/>
    </location>
</feature>
<feature type="transmembrane region" description="Helical" evidence="2">
    <location>
        <begin position="227"/>
        <end position="247"/>
    </location>
</feature>
<feature type="transmembrane region" description="Helical" evidence="2">
    <location>
        <begin position="289"/>
        <end position="309"/>
    </location>
</feature>
<feature type="transmembrane region" description="Helical" evidence="2">
    <location>
        <begin position="321"/>
        <end position="341"/>
    </location>
</feature>
<feature type="transmembrane region" description="Helical" evidence="2">
    <location>
        <begin position="348"/>
        <end position="368"/>
    </location>
</feature>
<feature type="binding site" description="axial binding residue" evidence="2">
    <location>
        <position position="84"/>
    </location>
    <ligand>
        <name>heme b</name>
        <dbReference type="ChEBI" id="CHEBI:60344"/>
        <label>b562</label>
    </ligand>
    <ligandPart>
        <name>Fe</name>
        <dbReference type="ChEBI" id="CHEBI:18248"/>
    </ligandPart>
</feature>
<feature type="binding site" description="axial binding residue" evidence="2">
    <location>
        <position position="98"/>
    </location>
    <ligand>
        <name>heme b</name>
        <dbReference type="ChEBI" id="CHEBI:60344"/>
        <label>b566</label>
    </ligand>
    <ligandPart>
        <name>Fe</name>
        <dbReference type="ChEBI" id="CHEBI:18248"/>
    </ligandPart>
</feature>
<feature type="binding site" description="axial binding residue" evidence="2">
    <location>
        <position position="183"/>
    </location>
    <ligand>
        <name>heme b</name>
        <dbReference type="ChEBI" id="CHEBI:60344"/>
        <label>b562</label>
    </ligand>
    <ligandPart>
        <name>Fe</name>
        <dbReference type="ChEBI" id="CHEBI:18248"/>
    </ligandPart>
</feature>
<feature type="binding site" description="axial binding residue" evidence="2">
    <location>
        <position position="197"/>
    </location>
    <ligand>
        <name>heme b</name>
        <dbReference type="ChEBI" id="CHEBI:60344"/>
        <label>b566</label>
    </ligand>
    <ligandPart>
        <name>Fe</name>
        <dbReference type="ChEBI" id="CHEBI:18248"/>
    </ligandPart>
</feature>
<feature type="binding site" evidence="2">
    <location>
        <position position="202"/>
    </location>
    <ligand>
        <name>a ubiquinone</name>
        <dbReference type="ChEBI" id="CHEBI:16389"/>
    </ligand>
</feature>
<dbReference type="EMBL" id="AF076061">
    <property type="protein sequence ID" value="AAC68618.1"/>
    <property type="molecule type" value="Genomic_DNA"/>
</dbReference>
<dbReference type="SMR" id="O79208"/>
<dbReference type="GO" id="GO:0005743">
    <property type="term" value="C:mitochondrial inner membrane"/>
    <property type="evidence" value="ECO:0007669"/>
    <property type="project" value="UniProtKB-SubCell"/>
</dbReference>
<dbReference type="GO" id="GO:0045275">
    <property type="term" value="C:respiratory chain complex III"/>
    <property type="evidence" value="ECO:0007669"/>
    <property type="project" value="InterPro"/>
</dbReference>
<dbReference type="GO" id="GO:0046872">
    <property type="term" value="F:metal ion binding"/>
    <property type="evidence" value="ECO:0007669"/>
    <property type="project" value="UniProtKB-KW"/>
</dbReference>
<dbReference type="GO" id="GO:0008121">
    <property type="term" value="F:ubiquinol-cytochrome-c reductase activity"/>
    <property type="evidence" value="ECO:0007669"/>
    <property type="project" value="InterPro"/>
</dbReference>
<dbReference type="GO" id="GO:0006122">
    <property type="term" value="P:mitochondrial electron transport, ubiquinol to cytochrome c"/>
    <property type="evidence" value="ECO:0007669"/>
    <property type="project" value="TreeGrafter"/>
</dbReference>
<dbReference type="CDD" id="cd00290">
    <property type="entry name" value="cytochrome_b_C"/>
    <property type="match status" value="1"/>
</dbReference>
<dbReference type="CDD" id="cd00284">
    <property type="entry name" value="Cytochrome_b_N"/>
    <property type="match status" value="1"/>
</dbReference>
<dbReference type="FunFam" id="1.20.810.10:FF:000002">
    <property type="entry name" value="Cytochrome b"/>
    <property type="match status" value="1"/>
</dbReference>
<dbReference type="Gene3D" id="1.20.810.10">
    <property type="entry name" value="Cytochrome Bc1 Complex, Chain C"/>
    <property type="match status" value="1"/>
</dbReference>
<dbReference type="InterPro" id="IPR005798">
    <property type="entry name" value="Cyt_b/b6_C"/>
</dbReference>
<dbReference type="InterPro" id="IPR036150">
    <property type="entry name" value="Cyt_b/b6_C_sf"/>
</dbReference>
<dbReference type="InterPro" id="IPR005797">
    <property type="entry name" value="Cyt_b/b6_N"/>
</dbReference>
<dbReference type="InterPro" id="IPR027387">
    <property type="entry name" value="Cytb/b6-like_sf"/>
</dbReference>
<dbReference type="InterPro" id="IPR030689">
    <property type="entry name" value="Cytochrome_b"/>
</dbReference>
<dbReference type="InterPro" id="IPR048260">
    <property type="entry name" value="Cytochrome_b_C_euk/bac"/>
</dbReference>
<dbReference type="InterPro" id="IPR048259">
    <property type="entry name" value="Cytochrome_b_N_euk/bac"/>
</dbReference>
<dbReference type="InterPro" id="IPR016174">
    <property type="entry name" value="Di-haem_cyt_TM"/>
</dbReference>
<dbReference type="PANTHER" id="PTHR19271">
    <property type="entry name" value="CYTOCHROME B"/>
    <property type="match status" value="1"/>
</dbReference>
<dbReference type="PANTHER" id="PTHR19271:SF16">
    <property type="entry name" value="CYTOCHROME B"/>
    <property type="match status" value="1"/>
</dbReference>
<dbReference type="Pfam" id="PF00032">
    <property type="entry name" value="Cytochrom_B_C"/>
    <property type="match status" value="1"/>
</dbReference>
<dbReference type="Pfam" id="PF00033">
    <property type="entry name" value="Cytochrome_B"/>
    <property type="match status" value="1"/>
</dbReference>
<dbReference type="PIRSF" id="PIRSF038885">
    <property type="entry name" value="COB"/>
    <property type="match status" value="1"/>
</dbReference>
<dbReference type="SUPFAM" id="SSF81648">
    <property type="entry name" value="a domain/subunit of cytochrome bc1 complex (Ubiquinol-cytochrome c reductase)"/>
    <property type="match status" value="1"/>
</dbReference>
<dbReference type="SUPFAM" id="SSF81342">
    <property type="entry name" value="Transmembrane di-heme cytochromes"/>
    <property type="match status" value="1"/>
</dbReference>
<dbReference type="PROSITE" id="PS51003">
    <property type="entry name" value="CYTB_CTER"/>
    <property type="match status" value="1"/>
</dbReference>
<dbReference type="PROSITE" id="PS51002">
    <property type="entry name" value="CYTB_NTER"/>
    <property type="match status" value="1"/>
</dbReference>
<proteinExistence type="inferred from homology"/>
<gene>
    <name type="primary">MT-CYB</name>
    <name type="synonym">COB</name>
    <name type="synonym">CYTB</name>
    <name type="synonym">MTCYB</name>
</gene>
<sequence>MAPNLRKSHPLLKMINNSLIDLPTPSNISAWWNFGSLLGICLMTQILTGLLLAMHYTADTTLAFSSVAHTCRNVQYGWLIRNLHANGASFFFICIYLHIGRGFYYGSYLYKETWNTGIILLLTLMATAFVGYVLPWGQMSFWGATVITNLFSAIPYIGQTLVEWAWGGFSVDNPTLTRFFALHFLLPFAIAGLTLIHLTFLHESGSNNPLGIVSNCDKIPFHPYFTLKDILGFTLMVLPLTSLALFSPNLLGDPENFTPANPLVTPPHIKPEWYFLFAYAILRSIPNKLGGVLALAASVLVLFLSPFLHKAKQRTMTFRPLSQLLFWILVTNLFILTWVGSQPVEHPFIIIGQLASITYFTILLILFPIIGTLENKMLNF</sequence>
<organism>
    <name type="scientific">Macronectes halli</name>
    <name type="common">Hall's giant petrel</name>
    <name type="synonym">Macronectes giganteus halli</name>
    <dbReference type="NCBI Taxonomy" id="79630"/>
    <lineage>
        <taxon>Eukaryota</taxon>
        <taxon>Metazoa</taxon>
        <taxon>Chordata</taxon>
        <taxon>Craniata</taxon>
        <taxon>Vertebrata</taxon>
        <taxon>Euteleostomi</taxon>
        <taxon>Archelosauria</taxon>
        <taxon>Archosauria</taxon>
        <taxon>Dinosauria</taxon>
        <taxon>Saurischia</taxon>
        <taxon>Theropoda</taxon>
        <taxon>Coelurosauria</taxon>
        <taxon>Aves</taxon>
        <taxon>Neognathae</taxon>
        <taxon>Neoaves</taxon>
        <taxon>Aequornithes</taxon>
        <taxon>Procellariiformes</taxon>
        <taxon>Procellariidae</taxon>
        <taxon>Macronectes</taxon>
    </lineage>
</organism>
<geneLocation type="mitochondrion"/>
<comment type="function">
    <text evidence="2">Component of the ubiquinol-cytochrome c reductase complex (complex III or cytochrome b-c1 complex) that is part of the mitochondrial respiratory chain. The b-c1 complex mediates electron transfer from ubiquinol to cytochrome c. Contributes to the generation of a proton gradient across the mitochondrial membrane that is then used for ATP synthesis.</text>
</comment>
<comment type="cofactor">
    <cofactor evidence="2">
        <name>heme b</name>
        <dbReference type="ChEBI" id="CHEBI:60344"/>
    </cofactor>
    <text evidence="2">Binds 2 heme b groups non-covalently.</text>
</comment>
<comment type="subunit">
    <text evidence="2">The cytochrome bc1 complex contains 11 subunits: 3 respiratory subunits (MT-CYB, CYC1 and UQCRFS1), 2 core proteins (UQCRC1 and UQCRC2) and 6 low-molecular weight proteins (UQCRH/QCR6, UQCRB/QCR7, UQCRQ/QCR8, UQCR10/QCR9, UQCR11/QCR10 and a cleavage product of UQCRFS1). This cytochrome bc1 complex then forms a dimer.</text>
</comment>
<comment type="subcellular location">
    <subcellularLocation>
        <location evidence="2">Mitochondrion inner membrane</location>
        <topology evidence="2">Multi-pass membrane protein</topology>
    </subcellularLocation>
</comment>
<comment type="miscellaneous">
    <text evidence="1">Heme 1 (or BL or b562) is low-potential and absorbs at about 562 nm, and heme 2 (or BH or b566) is high-potential and absorbs at about 566 nm.</text>
</comment>
<comment type="similarity">
    <text evidence="3 4">Belongs to the cytochrome b family.</text>
</comment>
<comment type="caution">
    <text evidence="2">The full-length protein contains only eight transmembrane helices, not nine as predicted by bioinformatics tools.</text>
</comment>
<accession>O79208</accession>
<name>CYB_MACHA</name>